<sequence length="2547" mass="292002">MEPHVLGAGLYWLLLPCTLLAASLLRFNALSLVYLLFLLLLPWLPGPSRHSIPGHTGRLLRALLCLSLLFLVAHLAFQICLHTVPHLDQFLGQNGSLWVKVSQHIGVTRLDLKDIFNTTRLVAPDLGVLLASSLCLGLCGRLTRKAGQSRRTQELQDDDDDDDDDDEDIDAAPAVGLKGAPALATKRRLWLASRFRVTAHWLLMTSGRTLVIVLLALAGIAHPSAFSSIYLVVFLAICTWWSCHFPLSPLGFNTLCVMVSCFGAGHLICLYCYQTPFIQDMLPPGNIWARLFGLKNFVDLPNYSSPNALVLNTKHAWPIYVSPGILLLLYYTATSLLKLHKSCPSELRKETPREDEEHELELDHLEPEPQARDATQGEMPMTTEPDLDNCTVHVLTSQSPVRQRPVRPRLAELKEMSPLHGLGHLIMDQSYVCALIAMMVWSIMYHSWLTFVLLLWACLIWTVRSRHQLAMLCSPCILLYGLTLCCLRYVWAMELPELPTTLGPVSLHQLGLEHTRYPCLDLGAMLLYLLTFWLLLRQFVKEKLLKKQKVPAALLEVTVADTEPTQTQTLLRSLGELVTGIYVKYWIYVCAGMFIVVSFAGRLVVYKIVYMFLFLLCLTLFQVYYTLWRKLLRVFWWLVVAYTMLVLIAVYTFQFQDFPTYWRNLTGFTDEQLGDLGLEQFSVSELFSSILIPGFFLLACILQLHYFHRPFMQLTDLEHVPPPGTRHPRWAHRQDAVSEAPLLEHQEEEEVFREDGQSMDGPHQATQVPEGTASKWGLVADRLLDLAASFSAVLTRIQVFVRRLLELHVFKLVALYTVWVALKEVSVMNLLLVVLWAFALPYPRFRPMASCLSTVWTCIIIVCKMLYQLKIVNPHEYSSNCTEPFPNNTNLQPLEINQSLLYRGPVDPANWFGVRKGYPNLGYIQNHLQILLLLVFEAVVYRRQEHYRRQHQQAPLPAQAVCADGTRQRLDQDLLSCLKYFINFFFYKFGLEICFLMAVNVIGQRMNFMVILHGCWLVAILTRRRREAIARLWPNYCLFLTLFLLYQYLLCLGMPPALCIDYPWRWSKAIPMNSALIKWLYLPDFFRAPNSTNLISDFLLLLCASQQWQVFSAERTEEWQRMAGINTDHLEPLRGEPNPIPNFIHCRSYLDMLKVAVFRYLFWLVLVVVFVAGATRISIFGLGYLLACFYLLLFGTTLLQKDTRAQLVLWDCLILYNVTVIISKNMLSLLSCVFVEQMQSNFCWVIQLFSLVCTVKGYYDPKEMMTRDRDCLLPVEEAGIIWDSICFFFLLLQRRIFLSHYFLHVSADLKATALQASRGFALYNAANLKSINFHRQIEEKSLAQLKRQMKRIRAKQEKYRQSQASRGQLQSKDPQDPSQEPGPDSPGGSSPPRRQWWRPWLDHATVIHSGDYFLFESDSEEEEEALPEDPRPAAQSAFQMAYQAWVTNAQTVLRQRRERARQERAEQLASGGDLNPDVEPVDVPEDEMAGRSHMMQRVLSTMQFLWVLGQATVDGLTRWLRAFTKHHRTMSDVLCAERYLLTQELLRVGEVRRGVLDQLYVGEDEATLSGPVETRDGPSTASSGLGAEEPLSSMTDDTSSPLSTGYNTRSGSEEIVTDAGDLQAGTSLHGSQELLANARTRMRTASELLLDRRLHIPELEEAERFEAQQGRTLRLLRAGYQCVAAHSELLCYFIIILNHMVTASAASLVLPVLVFLWAMLTIPRPSKRFWMTAIVFTEVMVVTKYLFQFGFFPWNSYVVLRRYENKPYFPPRILGLEKTDSYIKYDLVQLMALFFHRSQLLCYGLWDHEEDRYPKDHCRSSVKDREAKEEPEAKLESQSETGTGHPKEPVLAGTPRDHIQGKGSIRSKDVIQDPPEDLKPRHTRHISIRFRRRKETPGPKGTAVMETEHEEGEGKETTERKRPRHTQEKSKFRERMKAAGRRLQSFCVSLAQSFYQPLQRFFHDILHTKYRAATDVYALMFLADIVDIIIIIFGFWAFGKHSAATDIASSLSDDQVPQAFLFMLLVQFGTMVIDRALYLRKTVLGKLAFQVVLVVAIHIWMFFILPAVTERMFSQNAVAQLWYFVKCIYFALSAYQIRCGYPTRILGNFLTKKYNHLNLFLFQGFRLVPFLVELRAVMDWVWTDTTLSLSNWMCVEDIYANIFIIKCSRETEKKYPQPKGQKKKKIVKYGMGGLIILFLIAIIWFPLLFMSLIRSVVGVVNQPIDVTVTLKLGGYEPLFTMSAQQPSIVPFTPQAYEELSQQFDPYPLAMQFISQYSPEDIVTAQIEGSSGALWRISPPSRAQMKQELYNGTADITLRFTWNFQRDLAKGGTVEYTNEKHTLELAPNSTARRQLAQLLEGRPDQSVVIPHLFPKYIRAPNGPEANPVKQLQPDEEEDYLGVRIQLRREQVGTGASGEQAGTKASDFLEWWVIELQDCKADCNLLPMVIFSDKVSPPSLGFLAGYGIVGLYVSIVLVVGKFVRGFFSEISHSIMFEELPCVDRILKLCQDIFLVRETRELELEEELYAKLIFLYRSPETMIKWTRERE</sequence>
<protein>
    <recommendedName>
        <fullName>Piezo-type mechanosensitive ion channel component 1</fullName>
    </recommendedName>
    <alternativeName>
        <fullName evidence="20">Protein FAM38A</fullName>
    </alternativeName>
</protein>
<proteinExistence type="evidence at protein level"/>
<organism>
    <name type="scientific">Mus musculus</name>
    <name type="common">Mouse</name>
    <dbReference type="NCBI Taxonomy" id="10090"/>
    <lineage>
        <taxon>Eukaryota</taxon>
        <taxon>Metazoa</taxon>
        <taxon>Chordata</taxon>
        <taxon>Craniata</taxon>
        <taxon>Vertebrata</taxon>
        <taxon>Euteleostomi</taxon>
        <taxon>Mammalia</taxon>
        <taxon>Eutheria</taxon>
        <taxon>Euarchontoglires</taxon>
        <taxon>Glires</taxon>
        <taxon>Rodentia</taxon>
        <taxon>Myomorpha</taxon>
        <taxon>Muroidea</taxon>
        <taxon>Muridae</taxon>
        <taxon>Murinae</taxon>
        <taxon>Mus</taxon>
        <taxon>Mus</taxon>
    </lineage>
</organism>
<accession>E2JF22</accession>
<comment type="function">
    <text evidence="2 5 6 8 10 11 12 13 14 15 16 17 18 19">Pore-forming subunit of the mechanosensitive non-specific cation Piezo channel required for rapidly adapting mechanically activated (MA) currents and has a key role in sensing touch and tactile pain (PubMed:20813920, PubMed:22343900, PubMed:38184690, PubMed:26390154, PubMed:29261642, PubMed:35388220, PubMed:37590348). Piezo channels are homotrimeric three-blade propeller-shaped structures that utilize a cap-motion and plug-and-latch mechanism to gate their ion-conducting pathways (PubMed:26390154, PubMed:29261642, PubMed:35388220, PubMed:37590348). Generates currents characterized by a linear current-voltage relationship that are sensitive to ruthenium red and gadolinium (PubMed:20813920, PubMed:22343900, PubMed:38228630). Conductance to monovalent alkali ions is highest for K(+), intermediate for Na(+) and lowest for Li(+) (By similarity). Divalent ions except for Mn(2+) permeate the channel but more slowly than the monovalent ions and they also reduce K(+) currents (By similarity). Plays a key role in epithelial cell adhesion by maintaining integrin activation through R-Ras recruitment to the ER, most probably in its activated state, and subsequent stimulation of calpain signaling (By similarity). In inner ear hair cells, PIEZO1/2 subunits may constitute part of the mechanotransducer (MET) non-selective cation channel complex where they may act as pore-forming ion-conducting component in the complex (PubMed:38228630). In the kidney, may contribute to the detection of intraluminal pressure changes and to urine flow sensing (PubMed:24157948). Acts as a shear-stress sensor that promotes endothelial cell organization and alignment in the direction of blood flow through calpain activation (By similarity). Plays a key role in blood vessel formation and vascular structure in both development and adult physiology (PubMed:24958852, PubMed:25119035, PubMed:36515266). Acts as a sensor of phosphatidylserine (PS) flipping at the plasma membrane and governs morphogenesis of muscle cells (PubMed:29799007). In myoblasts, flippase-mediated PS enrichment at the inner leaflet of plasma membrane triggers channel activation and Ca(2+) influx followed by Rho GTPases signal transduction, leading to assembly of cortical actomyosin fibers and myotube formation (PubMed:29799007).</text>
</comment>
<comment type="catalytic activity">
    <reaction evidence="5">
        <text>K(+)(in) = K(+)(out)</text>
        <dbReference type="Rhea" id="RHEA:29463"/>
        <dbReference type="ChEBI" id="CHEBI:29103"/>
    </reaction>
</comment>
<comment type="catalytic activity">
    <reaction evidence="5">
        <text>Na(+)(in) = Na(+)(out)</text>
        <dbReference type="Rhea" id="RHEA:34963"/>
        <dbReference type="ChEBI" id="CHEBI:29101"/>
    </reaction>
</comment>
<comment type="catalytic activity">
    <reaction evidence="5">
        <text>Ca(2+)(in) = Ca(2+)(out)</text>
        <dbReference type="Rhea" id="RHEA:29671"/>
        <dbReference type="ChEBI" id="CHEBI:29108"/>
    </reaction>
</comment>
<comment type="catalytic activity">
    <reaction evidence="5">
        <text>Mg(2+)(in) = Mg(2+)(out)</text>
        <dbReference type="Rhea" id="RHEA:29827"/>
        <dbReference type="ChEBI" id="CHEBI:18420"/>
    </reaction>
</comment>
<comment type="activity regulation">
    <text evidence="2 14 17">Regulated by auxillary subunits MDFIC and MDFI (PubMed:37590348). Down-regulated by phosphatidylserines exposed on the cell surface (PubMed:29799007). Divalent ions decrease the single-channel permeability of K(+) (By similarity).</text>
</comment>
<comment type="subunit">
    <text evidence="6 8 9 12 13 15 17 19">Homotrimer; the homotrimer forms a propeller-shaped Piezo channel with a cation-ion conducting pore (PubMed:26390154, PubMed:29261642, PubMed:35388220, PubMed:37590348). Heterotrimeric interaction may occur between PIEZO1 and PIEZO2 (PubMed:38228630). Interacts with PKD2 (PubMed:24157948). Interacts with STOMl3 (PubMed:24662763). Interacts with TMC1, TMC2, PCDG15 and CIB2; the interaction may be part of the MET complex (PubMed:38228630). Interacts with MDFIC (via C-terminus); the interaction prolongs Piezo channel inactivation (PubMed:37590348). Interacts with MDFI (via C-terminus); the interaction prolongs Piezo channel inactivation (PubMed:37590348).</text>
</comment>
<comment type="interaction">
    <interactant intactId="EBI-9837938">
        <id>E2JF22</id>
    </interactant>
    <interactant intactId="EBI-770763">
        <id>O55143</id>
        <label>Atp2a2</label>
    </interactant>
    <organismsDiffer>false</organismsDiffer>
    <experiments>3</experiments>
</comment>
<comment type="interaction">
    <interactant intactId="EBI-9837938">
        <id>E2JF22</id>
    </interactant>
    <interactant intactId="EBI-9837938">
        <id>E2JF22</id>
        <label>Piezo1</label>
    </interactant>
    <organismsDiffer>false</organismsDiffer>
    <experiments>12</experiments>
</comment>
<comment type="interaction">
    <interactant intactId="EBI-9837938">
        <id>E2JF22</id>
    </interactant>
    <interactant intactId="EBI-9823400">
        <id>O35245</id>
        <label>Pkd2</label>
    </interactant>
    <organismsDiffer>false</organismsDiffer>
    <experiments>3</experiments>
</comment>
<comment type="interaction">
    <interactant intactId="EBI-9837938">
        <id>E2JF22</id>
    </interactant>
    <interactant intactId="EBI-11613988">
        <id>P16615-1</id>
        <label>ATP2A2</label>
    </interactant>
    <organismsDiffer>true</organismsDiffer>
    <experiments>2</experiments>
</comment>
<comment type="subcellular location">
    <subcellularLocation>
        <location evidence="2">Endoplasmic reticulum membrane</location>
        <topology evidence="13 15 17">Multi-pass membrane protein</topology>
    </subcellularLocation>
    <subcellularLocation>
        <location evidence="1">Endoplasmic reticulum-Golgi intermediate compartment membrane</location>
    </subcellularLocation>
    <subcellularLocation>
        <location evidence="5 12 13 16 18 19">Cell membrane</location>
        <topology evidence="12 13 15 17">Multi-pass membrane protein</topology>
    </subcellularLocation>
    <subcellularLocation>
        <location evidence="2">Cell projection</location>
        <location evidence="2">Lamellipodium membrane</location>
    </subcellularLocation>
    <text evidence="2 7 14 16 19">In erythrocytes, located in the plasma membrane (PubMed:23479567). Accumulates at the leading apical lamellipodia of endothelial cells in response to shear stress (By similarity). Colocalizes with F-actin and MYH9 at the actomyosin cortex in myoblasts. Non-uniform distribution of Piezo1 in the red blood cell membrane with an enrichment at the dimple (PubMed:36515266). Located at the tips and sides of stereocilia and cuticular plate membranes (PubMed:38228630).</text>
</comment>
<comment type="tissue specificity">
    <text evidence="5 7 10 14 16 19">Expressed in bladder, colon, kidney and skin. Also expressed in bone marrow, liver, lung, spleen and erythrocytes (at protein level). Expressed in myoblasts (at protein level). Expressed in red blood cells (PubMed:36515266). Expressed in cochlear inner and outer hair cells (IHCs and OHCs) and vestibular organ HCs (PubMed:38228630).</text>
</comment>
<comment type="developmental stage">
    <text evidence="7">Expressed at least from 9.5 dpc. Expression levels increase up to 15.5 dpc and remain high at least until birth.</text>
</comment>
<comment type="disruption phenotype">
    <text evidence="10 11 19">Embryo lethality at midgestation with defects in vascular remodeling. Conditional knockout mice in inner ear hair cells show no auditory and vestibular defects (PubMed:38228630).</text>
</comment>
<comment type="miscellaneous">
    <text evidence="22">Piezo comes from the Greek 'piesi' meaning pressure.</text>
</comment>
<comment type="similarity">
    <text evidence="21">Belongs to the PIEZO (TC 1.A.75) family.</text>
</comment>
<dbReference type="EMBL" id="HQ215520">
    <property type="protein sequence ID" value="ADN28064.1"/>
    <property type="molecule type" value="mRNA"/>
</dbReference>
<dbReference type="CCDS" id="CCDS90474.1"/>
<dbReference type="PDB" id="3JAC">
    <property type="method" value="EM"/>
    <property type="resolution" value="4.80 A"/>
    <property type="chains" value="A/B/C=1-2547"/>
</dbReference>
<dbReference type="PDB" id="4RAX">
    <property type="method" value="X-ray"/>
    <property type="resolution" value="1.45 A"/>
    <property type="chains" value="A=2214-2457"/>
</dbReference>
<dbReference type="PDB" id="5Z10">
    <property type="method" value="EM"/>
    <property type="resolution" value="3.97 A"/>
    <property type="chains" value="A/B/C=1-2547"/>
</dbReference>
<dbReference type="PDB" id="6B3R">
    <property type="method" value="EM"/>
    <property type="resolution" value="3.80 A"/>
    <property type="chains" value="A/C/E=1-2547"/>
</dbReference>
<dbReference type="PDB" id="6BPZ">
    <property type="method" value="EM"/>
    <property type="resolution" value="3.80 A"/>
    <property type="chains" value="A/B/C=1137-2547"/>
</dbReference>
<dbReference type="PDB" id="6LQI">
    <property type="method" value="EM"/>
    <property type="resolution" value="4.50 A"/>
    <property type="chains" value="A/B/C=1-2547"/>
</dbReference>
<dbReference type="PDB" id="7WLT">
    <property type="method" value="EM"/>
    <property type="resolution" value="3.46 A"/>
    <property type="chains" value="A/C/E=1-2547"/>
</dbReference>
<dbReference type="PDB" id="7WLU">
    <property type="method" value="EM"/>
    <property type="resolution" value="6.81 A"/>
    <property type="chains" value="A/C/E=1-2547"/>
</dbReference>
<dbReference type="PDB" id="8IMZ">
    <property type="method" value="EM"/>
    <property type="resolution" value="3.66 A"/>
    <property type="chains" value="A/B/C=1-2547"/>
</dbReference>
<dbReference type="PDB" id="8IXN">
    <property type="method" value="EM"/>
    <property type="resolution" value="4.07 A"/>
    <property type="chains" value="A/C/D=1-2547"/>
</dbReference>
<dbReference type="PDB" id="8IXO">
    <property type="method" value="EM"/>
    <property type="resolution" value="4.00 A"/>
    <property type="chains" value="A/B/F=1-2547"/>
</dbReference>
<dbReference type="PDBsum" id="3JAC"/>
<dbReference type="PDBsum" id="4RAX"/>
<dbReference type="PDBsum" id="5Z10"/>
<dbReference type="PDBsum" id="6B3R"/>
<dbReference type="PDBsum" id="6BPZ"/>
<dbReference type="PDBsum" id="6LQI"/>
<dbReference type="PDBsum" id="7WLT"/>
<dbReference type="PDBsum" id="7WLU"/>
<dbReference type="PDBsum" id="8IMZ"/>
<dbReference type="PDBsum" id="8IXN"/>
<dbReference type="PDBsum" id="8IXO"/>
<dbReference type="EMDB" id="EMD-0946"/>
<dbReference type="EMDB" id="EMD-32592"/>
<dbReference type="EMDB" id="EMD-32593"/>
<dbReference type="EMDB" id="EMD-35577"/>
<dbReference type="EMDB" id="EMD-35799"/>
<dbReference type="EMDB" id="EMD-35800"/>
<dbReference type="EMDB" id="EMD-35994"/>
<dbReference type="EMDB" id="EMD-36004"/>
<dbReference type="EMDB" id="EMD-36241"/>
<dbReference type="EMDB" id="EMD-36242"/>
<dbReference type="EMDB" id="EMD-36243"/>
<dbReference type="EMDB" id="EMD-36244"/>
<dbReference type="EMDB" id="EMD-6343"/>
<dbReference type="EMDB" id="EMD-6865"/>
<dbReference type="EMDB" id="EMD-7042"/>
<dbReference type="EMDB" id="EMD-7128"/>
<dbReference type="SMR" id="E2JF22"/>
<dbReference type="DIP" id="DIP-59655N"/>
<dbReference type="FunCoup" id="E2JF22">
    <property type="interactions" value="478"/>
</dbReference>
<dbReference type="IntAct" id="E2JF22">
    <property type="interactions" value="5"/>
</dbReference>
<dbReference type="MINT" id="E2JF22"/>
<dbReference type="STRING" id="10090.ENSMUSP00000089777"/>
<dbReference type="BindingDB" id="E2JF22"/>
<dbReference type="ChEMBL" id="CHEMBL5169095"/>
<dbReference type="GuidetoPHARMACOLOGY" id="2945"/>
<dbReference type="TCDB" id="1.A.75.1.14">
    <property type="family name" value="the mechanical nociceptor, piezo (piezo) family"/>
</dbReference>
<dbReference type="GlyConnect" id="2587">
    <property type="glycosylation" value="2 N-Linked glycans (1 site)"/>
</dbReference>
<dbReference type="GlyCosmos" id="E2JF22">
    <property type="glycosylation" value="3 sites, 2 glycans"/>
</dbReference>
<dbReference type="GlyGen" id="E2JF22">
    <property type="glycosylation" value="6 sites, 5 N-linked glycans (3 sites), 1 O-linked glycan (1 site)"/>
</dbReference>
<dbReference type="iPTMnet" id="E2JF22"/>
<dbReference type="PhosphoSitePlus" id="E2JF22"/>
<dbReference type="SwissPalm" id="E2JF22"/>
<dbReference type="jPOST" id="E2JF22"/>
<dbReference type="PaxDb" id="10090-ENSMUSP00000089777"/>
<dbReference type="PeptideAtlas" id="E2JF22"/>
<dbReference type="ProteomicsDB" id="289571"/>
<dbReference type="Pumba" id="E2JF22"/>
<dbReference type="AGR" id="MGI:3603204"/>
<dbReference type="MGI" id="MGI:3603204">
    <property type="gene designation" value="Piezo1"/>
</dbReference>
<dbReference type="eggNOG" id="KOG1893">
    <property type="taxonomic scope" value="Eukaryota"/>
</dbReference>
<dbReference type="InParanoid" id="E2JF22"/>
<dbReference type="ChiTaRS" id="Piezo1">
    <property type="organism name" value="mouse"/>
</dbReference>
<dbReference type="EvolutionaryTrace" id="E2JF22"/>
<dbReference type="PRO" id="PR:E2JF22"/>
<dbReference type="Proteomes" id="UP000000589">
    <property type="component" value="Unplaced"/>
</dbReference>
<dbReference type="RNAct" id="E2JF22">
    <property type="molecule type" value="protein"/>
</dbReference>
<dbReference type="GO" id="GO:0032437">
    <property type="term" value="C:cuticular plate"/>
    <property type="evidence" value="ECO:0000314"/>
    <property type="project" value="UniProtKB"/>
</dbReference>
<dbReference type="GO" id="GO:0005783">
    <property type="term" value="C:endoplasmic reticulum"/>
    <property type="evidence" value="ECO:0000250"/>
    <property type="project" value="UniProtKB"/>
</dbReference>
<dbReference type="GO" id="GO:0005789">
    <property type="term" value="C:endoplasmic reticulum membrane"/>
    <property type="evidence" value="ECO:0007669"/>
    <property type="project" value="UniProtKB-SubCell"/>
</dbReference>
<dbReference type="GO" id="GO:0033116">
    <property type="term" value="C:endoplasmic reticulum-Golgi intermediate compartment membrane"/>
    <property type="evidence" value="ECO:0007669"/>
    <property type="project" value="UniProtKB-SubCell"/>
</dbReference>
<dbReference type="GO" id="GO:0031258">
    <property type="term" value="C:lamellipodium membrane"/>
    <property type="evidence" value="ECO:0007669"/>
    <property type="project" value="UniProtKB-SubCell"/>
</dbReference>
<dbReference type="GO" id="GO:0005886">
    <property type="term" value="C:plasma membrane"/>
    <property type="evidence" value="ECO:0000314"/>
    <property type="project" value="MGI"/>
</dbReference>
<dbReference type="GO" id="GO:0032420">
    <property type="term" value="C:stereocilium"/>
    <property type="evidence" value="ECO:0000314"/>
    <property type="project" value="UniProtKB"/>
</dbReference>
<dbReference type="GO" id="GO:0042802">
    <property type="term" value="F:identical protein binding"/>
    <property type="evidence" value="ECO:0000353"/>
    <property type="project" value="IntAct"/>
</dbReference>
<dbReference type="GO" id="GO:0140135">
    <property type="term" value="F:mechanosensitive monoatomic cation channel activity"/>
    <property type="evidence" value="ECO:0000314"/>
    <property type="project" value="MGI"/>
</dbReference>
<dbReference type="GO" id="GO:0008381">
    <property type="term" value="F:mechanosensitive monoatomic ion channel activity"/>
    <property type="evidence" value="ECO:0000314"/>
    <property type="project" value="MGI"/>
</dbReference>
<dbReference type="GO" id="GO:0005261">
    <property type="term" value="F:monoatomic cation channel activity"/>
    <property type="evidence" value="ECO:0000314"/>
    <property type="project" value="MGI"/>
</dbReference>
<dbReference type="GO" id="GO:0050982">
    <property type="term" value="P:detection of mechanical stimulus"/>
    <property type="evidence" value="ECO:0000315"/>
    <property type="project" value="MGI"/>
</dbReference>
<dbReference type="GO" id="GO:0006812">
    <property type="term" value="P:monoatomic cation transport"/>
    <property type="evidence" value="ECO:0000314"/>
    <property type="project" value="MGI"/>
</dbReference>
<dbReference type="GO" id="GO:0033634">
    <property type="term" value="P:positive regulation of cell-cell adhesion mediated by integrin"/>
    <property type="evidence" value="ECO:0000250"/>
    <property type="project" value="UniProtKB"/>
</dbReference>
<dbReference type="GO" id="GO:0033625">
    <property type="term" value="P:positive regulation of integrin activation"/>
    <property type="evidence" value="ECO:0000250"/>
    <property type="project" value="UniProtKB"/>
</dbReference>
<dbReference type="GO" id="GO:0010831">
    <property type="term" value="P:positive regulation of myotube differentiation"/>
    <property type="evidence" value="ECO:0000315"/>
    <property type="project" value="UniProtKB"/>
</dbReference>
<dbReference type="GO" id="GO:0042391">
    <property type="term" value="P:regulation of membrane potential"/>
    <property type="evidence" value="ECO:0000315"/>
    <property type="project" value="MGI"/>
</dbReference>
<dbReference type="InterPro" id="IPR027272">
    <property type="entry name" value="Piezo"/>
</dbReference>
<dbReference type="InterPro" id="IPR031334">
    <property type="entry name" value="Piezo_cap_dom"/>
</dbReference>
<dbReference type="InterPro" id="IPR056770">
    <property type="entry name" value="Piezo_THU9_anchor"/>
</dbReference>
<dbReference type="InterPro" id="IPR056769">
    <property type="entry name" value="Piezo_TM1-24"/>
</dbReference>
<dbReference type="InterPro" id="IPR031805">
    <property type="entry name" value="Piezo_TM25-28"/>
</dbReference>
<dbReference type="InterPro" id="IPR056768">
    <property type="entry name" value="THU_Piezo"/>
</dbReference>
<dbReference type="PANTHER" id="PTHR47049:SF5">
    <property type="entry name" value="PIEZO-TYPE MECHANOSENSITIVE ION CHANNEL COMPONENT"/>
    <property type="match status" value="1"/>
</dbReference>
<dbReference type="PANTHER" id="PTHR47049">
    <property type="entry name" value="PIEZO-TYPE MECHANOSENSITIVE ION CHANNEL HOMOLOG"/>
    <property type="match status" value="1"/>
</dbReference>
<dbReference type="Pfam" id="PF12166">
    <property type="entry name" value="Piezo_cap"/>
    <property type="match status" value="1"/>
</dbReference>
<dbReference type="Pfam" id="PF24874">
    <property type="entry name" value="Piezo_THU9_anchor"/>
    <property type="match status" value="1"/>
</dbReference>
<dbReference type="Pfam" id="PF24871">
    <property type="entry name" value="Piezo_TM1-24"/>
    <property type="match status" value="1"/>
</dbReference>
<dbReference type="Pfam" id="PF15917">
    <property type="entry name" value="Piezo_TM25-28"/>
    <property type="match status" value="1"/>
</dbReference>
<dbReference type="Pfam" id="PF23188">
    <property type="entry name" value="THU_Piezo1"/>
    <property type="match status" value="1"/>
</dbReference>
<reference key="1">
    <citation type="journal article" date="2010" name="Science">
        <title>Piezo1 and Piezo2 are essential components of distinct mechanically activated cation channels.</title>
        <authorList>
            <person name="Coste B."/>
            <person name="Mathur J."/>
            <person name="Schmidt M."/>
            <person name="Earley T.J."/>
            <person name="Ranade S."/>
            <person name="Petrus M.J."/>
            <person name="Dubin A.E."/>
            <person name="Patapoutian A."/>
        </authorList>
    </citation>
    <scope>NUCLEOTIDE SEQUENCE [MRNA]</scope>
    <scope>FUNCTION</scope>
    <scope>SUBCELLULAR LOCATION</scope>
    <scope>TISSUE SPECIFICITY</scope>
    <scope>TRANSPORTER ACTIVITY</scope>
</reference>
<reference key="2">
    <citation type="journal article" date="2009" name="Immunity">
        <title>The phagosomal proteome in interferon-gamma-activated macrophages.</title>
        <authorList>
            <person name="Trost M."/>
            <person name="English L."/>
            <person name="Lemieux S."/>
            <person name="Courcelles M."/>
            <person name="Desjardins M."/>
            <person name="Thibault P."/>
        </authorList>
    </citation>
    <scope>PHOSPHORYLATION [LARGE SCALE ANALYSIS] AT SER-1385 AND SER-1646</scope>
    <scope>IDENTIFICATION BY MASS SPECTROMETRY [LARGE SCALE ANALYSIS]</scope>
</reference>
<reference key="3">
    <citation type="journal article" date="2010" name="Cell">
        <title>A tissue-specific atlas of mouse protein phosphorylation and expression.</title>
        <authorList>
            <person name="Huttlin E.L."/>
            <person name="Jedrychowski M.P."/>
            <person name="Elias J.E."/>
            <person name="Goswami T."/>
            <person name="Rad R."/>
            <person name="Beausoleil S.A."/>
            <person name="Villen J."/>
            <person name="Haas W."/>
            <person name="Sowa M.E."/>
            <person name="Gygi S.P."/>
        </authorList>
    </citation>
    <scope>PHOSPHORYLATION [LARGE SCALE ANALYSIS] AT SER-1627; SER-1631 AND SER-1646</scope>
    <scope>IDENTIFICATION BY MASS SPECTROMETRY [LARGE SCALE ANALYSIS]</scope>
    <source>
        <tissue>Brown adipose tissue</tissue>
        <tissue>Kidney</tissue>
        <tissue>Lung</tissue>
        <tissue>Spleen</tissue>
        <tissue>Testis</tissue>
    </source>
</reference>
<reference key="4">
    <citation type="journal article" date="2012" name="Nature">
        <title>Piezo proteins are pore-forming subunits of mechanically activated channels.</title>
        <authorList>
            <person name="Coste B."/>
            <person name="Xiao B."/>
            <person name="Santos J.S."/>
            <person name="Syeda R."/>
            <person name="Grandl J."/>
            <person name="Spencer K.S."/>
            <person name="Kim S.E."/>
            <person name="Schmidt M."/>
            <person name="Mathur J."/>
            <person name="Dubin A.E."/>
            <person name="Montal M."/>
            <person name="Patapoutian A."/>
        </authorList>
    </citation>
    <scope>FUNCTION</scope>
    <scope>SUBCELLULAR LOCATION</scope>
</reference>
<reference key="5">
    <citation type="journal article" date="2013" name="Blood">
        <title>Multiple clinical forms of dehydrated hereditary stomatocytosis arise from mutations in PIEZO1.</title>
        <authorList>
            <person name="Andolfo I."/>
            <person name="Alper S.L."/>
            <person name="De Franceschi L."/>
            <person name="Auriemma C."/>
            <person name="Russo R."/>
            <person name="De Falco L."/>
            <person name="Vallefuoco F."/>
            <person name="Esposito M.R."/>
            <person name="Vandorpe D.H."/>
            <person name="Shmukler B.E."/>
            <person name="Narayan R."/>
            <person name="Montanaro D."/>
            <person name="D'Armiento M."/>
            <person name="Vetro A."/>
            <person name="Limongelli I."/>
            <person name="Zuffardi O."/>
            <person name="Glader B.E."/>
            <person name="Schrier S.L."/>
            <person name="Brugnara C."/>
            <person name="Stewart G.W."/>
            <person name="Delaunay J."/>
            <person name="Iolascon A."/>
        </authorList>
    </citation>
    <scope>SUBCELLULAR LOCATION</scope>
    <scope>TISSUE SPECIFICITY</scope>
    <scope>DEVELOPMENTAL STAGE</scope>
</reference>
<reference key="6">
    <citation type="journal article" date="2013" name="EMBO Rep.">
        <title>Piezo1-dependent stretch-activated channels are inhibited by Polycystin-2 in renal tubular epithelial cells.</title>
        <authorList>
            <person name="Peyronnet R."/>
            <person name="Martins J.R."/>
            <person name="Duprat F."/>
            <person name="Demolombe S."/>
            <person name="Arhatte M."/>
            <person name="Jodar M."/>
            <person name="Tauc M."/>
            <person name="Duranton C."/>
            <person name="Paulais M."/>
            <person name="Teulon J."/>
            <person name="Honore E."/>
            <person name="Patel A."/>
        </authorList>
    </citation>
    <scope>INTERACTION WITH PKD2</scope>
    <scope>FUNCTION</scope>
</reference>
<reference key="7">
    <citation type="journal article" date="2014" name="Nat. Commun.">
        <title>Tuning Piezo ion channels to detect molecular-scale movements relevant for fine touch.</title>
        <authorList>
            <person name="Poole K."/>
            <person name="Herget R."/>
            <person name="Lapatsina L."/>
            <person name="Ngo H.D."/>
            <person name="Lewin G.R."/>
        </authorList>
    </citation>
    <scope>INTERACTION WITH STOML3</scope>
</reference>
<reference key="8">
    <citation type="journal article" date="2014" name="Proc. Natl. Acad. Sci. U.S.A.">
        <title>Piezo1, a mechanically activated ion channel, is required for vascular development in mice.</title>
        <authorList>
            <person name="Ranade S.S."/>
            <person name="Qiu Z."/>
            <person name="Woo S.H."/>
            <person name="Hur S.S."/>
            <person name="Murthy S.E."/>
            <person name="Cahalan S.M."/>
            <person name="Xu J."/>
            <person name="Mathur J."/>
            <person name="Bandell M."/>
            <person name="Coste B."/>
            <person name="Li Y.S."/>
            <person name="Chien S."/>
            <person name="Patapoutian A."/>
        </authorList>
    </citation>
    <scope>FUNCTION</scope>
    <scope>TISSUE SPECIFICITY</scope>
    <scope>DISRUPTION PHENOTYPE</scope>
</reference>
<reference key="9">
    <citation type="journal article" date="2014" name="Nature">
        <title>Piezo1 integration of vascular architecture with physiological force.</title>
        <authorList>
            <person name="Li J."/>
            <person name="Hou B."/>
            <person name="Tumova S."/>
            <person name="Muraki K."/>
            <person name="Bruns A."/>
            <person name="Ludlow M.J."/>
            <person name="Sedo A."/>
            <person name="Hyman A.J."/>
            <person name="McKeown L."/>
            <person name="Young R.S."/>
            <person name="Yuldasheva N.Y."/>
            <person name="Majeed Y."/>
            <person name="Wilson L.A."/>
            <person name="Rode B."/>
            <person name="Bailey M.A."/>
            <person name="Kim H.R."/>
            <person name="Fu Z."/>
            <person name="Carter D.A."/>
            <person name="Bilton J."/>
            <person name="Imrie H."/>
            <person name="Ajuh P."/>
            <person name="Dear T.N."/>
            <person name="Cubbon R.M."/>
            <person name="Kearney M.T."/>
            <person name="Prasad R.K."/>
            <person name="Evans P.C."/>
            <person name="Ainscough J.F."/>
            <person name="Beech D.J."/>
        </authorList>
    </citation>
    <scope>DISRUPTION PHENOTYPE</scope>
    <scope>FUNCTION</scope>
</reference>
<reference key="10">
    <citation type="journal article" date="2018" name="Nat. Commun.">
        <title>Cell surface flip-flop of phosphatidylserine is critical for PIEZO1-mediated myotube formation.</title>
        <authorList>
            <person name="Tsuchiya M."/>
            <person name="Hara Y."/>
            <person name="Okuda M."/>
            <person name="Itoh K."/>
            <person name="Nishioka R."/>
            <person name="Shiomi A."/>
            <person name="Nagao K."/>
            <person name="Mori M."/>
            <person name="Mori Y."/>
            <person name="Ikenouchi J."/>
            <person name="Suzuki R."/>
            <person name="Tanaka M."/>
            <person name="Ohwada T."/>
            <person name="Aoki J."/>
            <person name="Kanagawa M."/>
            <person name="Toda T."/>
            <person name="Nagata Y."/>
            <person name="Matsuda R."/>
            <person name="Takayama Y."/>
            <person name="Tominaga M."/>
            <person name="Umeda M."/>
        </authorList>
    </citation>
    <scope>FUNCTION</scope>
    <scope>ACTIVITY REGULATION</scope>
    <scope>TISSUE SPECIFICITY</scope>
    <scope>SUBCELLULAR LOCATION</scope>
</reference>
<reference key="11">
    <citation type="journal article" date="2022" name="Elife">
        <title>Piezo1 as a force-through-membrane sensor in red blood cells.</title>
        <authorList>
            <person name="Vaisey G."/>
            <person name="Banerjee P."/>
            <person name="North A.J."/>
            <person name="Haselwandter C.A."/>
            <person name="MacKinnon R."/>
        </authorList>
    </citation>
    <scope>FUNCTION</scope>
    <scope>TISSUE SPECIFICITY</scope>
    <scope>SUBCELLULAR LOCATION</scope>
</reference>
<reference key="12">
    <citation type="journal article" date="2024" name="Nat. Commun.">
        <title>PIEZO1 loss-of-function compound heterozygous mutations in the rare congenital human disorder Prune Belly Syndrome.</title>
        <authorList>
            <person name="Amado N.G."/>
            <person name="Nosyreva E.D."/>
            <person name="Thompson D."/>
            <person name="Egeland T.J."/>
            <person name="Ogujiofor O.W."/>
            <person name="Yang M."/>
            <person name="Fusco A.N."/>
            <person name="Passoni N."/>
            <person name="Mathews J."/>
            <person name="Cantarel B."/>
            <person name="Baker L.A."/>
            <person name="Syeda R."/>
        </authorList>
    </citation>
    <scope>MUTAGENESIS OF SER-260 AND SER-2211</scope>
    <scope>FUNCTION</scope>
    <scope>SUBCELLULAR LOCATION</scope>
</reference>
<reference key="13">
    <citation type="journal article" date="2024" name="Nat. Commun.">
        <title>The Piezo channel is a mechano-sensitive complex component in the mammalian inner ear hair cell.</title>
        <authorList>
            <person name="Lee J.H."/>
            <person name="Perez-Flores M.C."/>
            <person name="Park S."/>
            <person name="Kim H.J."/>
            <person name="Chen Y."/>
            <person name="Kang M."/>
            <person name="Kersigo J."/>
            <person name="Choi J."/>
            <person name="Thai P.N."/>
            <person name="Woltz R.L."/>
            <person name="Perez-Flores D.C."/>
            <person name="Perkins G."/>
            <person name="Sihn C.R."/>
            <person name="Trinh P."/>
            <person name="Zhang X.D."/>
            <person name="Sirish P."/>
            <person name="Dong Y."/>
            <person name="Feng W.W."/>
            <person name="Pessah I.N."/>
            <person name="Dixon R.E."/>
            <person name="Sokolowski B."/>
            <person name="Fritzsch B."/>
            <person name="Chiamvimonvat N."/>
            <person name="Yamoah E.N."/>
        </authorList>
    </citation>
    <scope>FUNCTION</scope>
    <scope>SUBUNIT</scope>
    <scope>INTERACTION WITH TMC1; TMC2; PCDH15 AND CIB2</scope>
    <scope>SUBCELLULAR LOCATION</scope>
    <scope>TISSUE SPECIFICITY</scope>
    <scope>DISRUPTION PHENOTYPE</scope>
    <scope>MUTAGENESIS OF 2493-MET--GLU-2496</scope>
</reference>
<reference evidence="26 27" key="14">
    <citation type="journal article" date="2015" name="Nature">
        <title>Architecture of the mammalian mechanosensitive Piezo1 channel.</title>
        <authorList>
            <person name="Ge J."/>
            <person name="Li W."/>
            <person name="Zhao Q."/>
            <person name="Li N."/>
            <person name="Chen M."/>
            <person name="Zhi P."/>
            <person name="Li R."/>
            <person name="Gao N."/>
            <person name="Xiao B."/>
            <person name="Yang M."/>
        </authorList>
    </citation>
    <scope>STRUCTURE BY ELECTRON MICROSCOPY (4.80 ANGSTROMS)</scope>
    <scope>X-RAY CRYSTALLOGRAPHY (1.45 ANGSTROMS) OF 2214-2457</scope>
    <scope>FUNCTION</scope>
    <scope>SUBUNIT</scope>
    <scope>SUBCELLULAR LOCATION</scope>
    <scope>TOPOLOGY</scope>
</reference>
<reference evidence="28" key="15">
    <citation type="journal article" date="2018" name="Nature">
        <title>Structure of the mechanically activated ion channel Piezo1.</title>
        <authorList>
            <person name="Saotome K."/>
            <person name="Murthy S.E."/>
            <person name="Kefauver J.M."/>
            <person name="Whitwam T."/>
            <person name="Patapoutian A."/>
            <person name="Ward A.B."/>
        </authorList>
    </citation>
    <scope>STRUCTURE BY ELECTRON MICROSCOPY (3.80 ANGSTROMS) OF 1137-2547</scope>
    <scope>DISULFIDE BONDS</scope>
    <scope>MUTAGENESIS OF 2493-MET-PHE-2494 AND PHE-2494</scope>
    <scope>FUNCTION</scope>
    <scope>SUBUNIT</scope>
    <scope>SUBCELLULAR LOCATION</scope>
</reference>
<reference evidence="29 30" key="16">
    <citation type="journal article" date="2022" name="Nature">
        <title>Structure deformation and curvature sensing of PIEZO1 in lipid membranes.</title>
        <authorList>
            <person name="Yang X."/>
            <person name="Lin C."/>
            <person name="Chen X."/>
            <person name="Li S."/>
            <person name="Li X."/>
            <person name="Xiao B."/>
        </authorList>
    </citation>
    <scope>STRUCTURE BY ELECTRON MICROSCOPY (3.46 ANGSTROMS)</scope>
    <scope>FUNCTION</scope>
    <scope>ACTIVITY REGULATION</scope>
    <scope>SUBUNIT</scope>
    <scope>INTERACTION WITH MDFIC AND MDFI</scope>
    <scope>SUBCELLULAR LOCATION</scope>
    <scope>TOPOLOGY</scope>
</reference>
<reference evidence="31" key="17">
    <citation type="journal article" date="2023" name="Science">
        <title>MyoD-family inhibitor proteins act as auxiliary subunits of Piezo channels.</title>
        <authorList>
            <person name="Zhou Z."/>
            <person name="Ma X."/>
            <person name="Lin Y."/>
            <person name="Cheng D."/>
            <person name="Bavi N."/>
            <person name="Secker G.A."/>
            <person name="Li J.V."/>
            <person name="Janbandhu V."/>
            <person name="Sutton D.L."/>
            <person name="Scott H.S."/>
            <person name="Yao M."/>
            <person name="Harvey R.P."/>
            <person name="Harvey N.L."/>
            <person name="Corry B."/>
            <person name="Zhang Y."/>
            <person name="Cox C.D."/>
        </authorList>
    </citation>
    <scope>STRUCTURE BY ELECTRON MICROSCOPY (3.66 ANGSTROMS) IN COMPLEX WITH MDFIC</scope>
    <scope>FUNCTION</scope>
    <scope>ACTIVITY REGULATION</scope>
    <scope>SUBUNIT</scope>
    <scope>SUBCELLULAR LOCATION</scope>
    <scope>INTERACTION WITH MDFIC AND MDFI</scope>
    <scope>TOPOLOGY</scope>
</reference>
<keyword id="KW-0002">3D-structure</keyword>
<keyword id="KW-1003">Cell membrane</keyword>
<keyword id="KW-0966">Cell projection</keyword>
<keyword id="KW-0175">Coiled coil</keyword>
<keyword id="KW-1015">Disulfide bond</keyword>
<keyword id="KW-0256">Endoplasmic reticulum</keyword>
<keyword id="KW-0325">Glycoprotein</keyword>
<keyword id="KW-0407">Ion channel</keyword>
<keyword id="KW-0406">Ion transport</keyword>
<keyword id="KW-0472">Membrane</keyword>
<keyword id="KW-0597">Phosphoprotein</keyword>
<keyword id="KW-1185">Reference proteome</keyword>
<keyword id="KW-0812">Transmembrane</keyword>
<keyword id="KW-1133">Transmembrane helix</keyword>
<keyword id="KW-0813">Transport</keyword>
<feature type="chain" id="PRO_0000403959" description="Piezo-type mechanosensitive ion channel component 1">
    <location>
        <begin position="1"/>
        <end position="2547"/>
    </location>
</feature>
<feature type="topological domain" description="Cytoplasmic" evidence="23 24">
    <location>
        <begin position="1"/>
        <end position="12"/>
    </location>
</feature>
<feature type="transmembrane region" description="Helical; Name=1" evidence="23 24">
    <location>
        <begin position="13"/>
        <end position="25"/>
    </location>
</feature>
<feature type="topological domain" description="Extracellular" evidence="23 24">
    <location>
        <begin position="26"/>
        <end position="28"/>
    </location>
</feature>
<feature type="transmembrane region" description="Helical; Name=2" evidence="23 24">
    <location>
        <begin position="29"/>
        <end position="44"/>
    </location>
</feature>
<feature type="topological domain" description="Cytoplasmic" evidence="23 24">
    <location>
        <begin position="45"/>
        <end position="58"/>
    </location>
</feature>
<feature type="transmembrane region" description="Helical; Name=3" evidence="23 24">
    <location>
        <begin position="59"/>
        <end position="81"/>
    </location>
</feature>
<feature type="topological domain" description="Extracellular" evidence="23 24">
    <location>
        <begin position="82"/>
        <end position="121"/>
    </location>
</feature>
<feature type="transmembrane region" description="Helical; Name=4" evidence="23 24">
    <location>
        <begin position="122"/>
        <end position="138"/>
    </location>
</feature>
<feature type="topological domain" description="Cytoplasmic" evidence="23 24">
    <location>
        <begin position="139"/>
        <end position="201"/>
    </location>
</feature>
<feature type="transmembrane region" description="Helical; Name=5" evidence="23 24">
    <location>
        <begin position="202"/>
        <end position="221"/>
    </location>
</feature>
<feature type="topological domain" description="Extracellular" evidence="23 24">
    <location>
        <begin position="222"/>
        <end position="223"/>
    </location>
</feature>
<feature type="transmembrane region" description="Helical; Name=6" evidence="23 24">
    <location>
        <begin position="224"/>
        <end position="243"/>
    </location>
</feature>
<feature type="topological domain" description="Cytoplasmic" evidence="23 24">
    <location>
        <begin position="244"/>
        <end position="254"/>
    </location>
</feature>
<feature type="transmembrane region" description="Helical; Name=7" evidence="23 24">
    <location>
        <begin position="255"/>
        <end position="275"/>
    </location>
</feature>
<feature type="topological domain" description="Extracellular" evidence="23 24">
    <location>
        <begin position="276"/>
        <end position="316"/>
    </location>
</feature>
<feature type="transmembrane region" description="Helical; Name=8" evidence="23 24">
    <location>
        <begin position="317"/>
        <end position="337"/>
    </location>
</feature>
<feature type="topological domain" description="Cytoplasmic" evidence="23 24">
    <location>
        <begin position="338"/>
        <end position="424"/>
    </location>
</feature>
<feature type="transmembrane region" description="Helical; Name=9" evidence="23 24">
    <location>
        <begin position="425"/>
        <end position="445"/>
    </location>
</feature>
<feature type="topological domain" description="Extracellular" evidence="23 24">
    <location>
        <begin position="446"/>
        <end position="447"/>
    </location>
</feature>
<feature type="transmembrane region" description="Helical; Name=10" evidence="23 24">
    <location>
        <begin position="448"/>
        <end position="463"/>
    </location>
</feature>
<feature type="topological domain" description="Cytoplasmic" evidence="23 24">
    <location>
        <begin position="464"/>
        <end position="468"/>
    </location>
</feature>
<feature type="transmembrane region" description="Helical; Name=11" evidence="23 24">
    <location>
        <begin position="469"/>
        <end position="491"/>
    </location>
</feature>
<feature type="topological domain" description="Extracellular" evidence="23 24">
    <location>
        <begin position="492"/>
        <end position="518"/>
    </location>
</feature>
<feature type="transmembrane region" description="Helical; Name=12" evidence="23 24">
    <location>
        <begin position="519"/>
        <end position="536"/>
    </location>
</feature>
<feature type="topological domain" description="Cytoplasmic" evidence="23 24">
    <location>
        <begin position="537"/>
        <end position="580"/>
    </location>
</feature>
<feature type="transmembrane region" description="Helical; Name=13" evidence="23 24">
    <location>
        <begin position="581"/>
        <end position="601"/>
    </location>
</feature>
<feature type="topological domain" description="Extracellular" evidence="23 24">
    <location>
        <position position="602"/>
    </location>
</feature>
<feature type="transmembrane region" description="Helical; Name=14" evidence="23 24">
    <location>
        <begin position="603"/>
        <end position="623"/>
    </location>
</feature>
<feature type="topological domain" description="Cytoplasmic" evidence="23 24">
    <location>
        <begin position="624"/>
        <end position="633"/>
    </location>
</feature>
<feature type="transmembrane region" description="Helical; Name=15" evidence="23 24">
    <location>
        <begin position="634"/>
        <end position="655"/>
    </location>
</feature>
<feature type="topological domain" description="Extracellular" evidence="23 24">
    <location>
        <begin position="656"/>
        <end position="685"/>
    </location>
</feature>
<feature type="transmembrane region" description="Helical; Name=16" evidence="23 24">
    <location>
        <begin position="686"/>
        <end position="702"/>
    </location>
</feature>
<feature type="topological domain" description="Cytoplasmic" evidence="15 17 29 31">
    <location>
        <begin position="703"/>
        <end position="811"/>
    </location>
</feature>
<feature type="transmembrane region" description="Helical; Name=17" evidence="15 17 29 31">
    <location>
        <begin position="812"/>
        <end position="823"/>
    </location>
</feature>
<feature type="topological domain" description="Extracellular" evidence="15 17 29 31">
    <location>
        <begin position="824"/>
        <end position="826"/>
    </location>
</feature>
<feature type="transmembrane region" description="Helical; Name=18" evidence="15 17 29 31">
    <location>
        <begin position="827"/>
        <end position="840"/>
    </location>
</feature>
<feature type="topological domain" description="Cytoplasmic" evidence="15 17 29 31">
    <location>
        <begin position="841"/>
        <end position="854"/>
    </location>
</feature>
<feature type="transmembrane region" description="Helical; Name=19" evidence="15 17 29 31">
    <location>
        <begin position="855"/>
        <end position="869"/>
    </location>
</feature>
<feature type="topological domain" description="Extracellular" evidence="15 17 29 31">
    <location>
        <begin position="870"/>
        <end position="921"/>
    </location>
</feature>
<feature type="transmembrane region" description="Helical; Name=20" evidence="15 17 29 31">
    <location>
        <begin position="922"/>
        <end position="949"/>
    </location>
</feature>
<feature type="topological domain" description="Cytoplasmic" evidence="15 17 29 31">
    <location>
        <begin position="950"/>
        <end position="989"/>
    </location>
</feature>
<feature type="transmembrane region" description="Helical; Name=21" evidence="15 17 29 31">
    <location>
        <begin position="990"/>
        <end position="1005"/>
    </location>
</feature>
<feature type="topological domain" description="Extracellular" evidence="15 17 29 31">
    <location>
        <begin position="1006"/>
        <end position="1007"/>
    </location>
</feature>
<feature type="transmembrane region" description="Helical; Name=22" evidence="17 29 31">
    <location>
        <begin position="1008"/>
        <end position="1023"/>
    </location>
</feature>
<feature type="topological domain" description="Cytoplasmic" evidence="15 17 29 31">
    <location>
        <begin position="1024"/>
        <end position="1036"/>
    </location>
</feature>
<feature type="transmembrane region" description="Helical; Name=23" evidence="15 17 29 31">
    <location>
        <begin position="1037"/>
        <end position="1052"/>
    </location>
</feature>
<feature type="topological domain" description="Extracellular" evidence="15 17 29 31">
    <location>
        <begin position="1053"/>
        <end position="1091"/>
    </location>
</feature>
<feature type="transmembrane region" description="Helical; Name=24" evidence="15 17 29 31">
    <location>
        <begin position="1092"/>
        <end position="1113"/>
    </location>
</feature>
<feature type="topological domain" description="Cytoplasmic" evidence="15 17 29 31">
    <location>
        <begin position="1114"/>
        <end position="1148"/>
    </location>
</feature>
<feature type="transmembrane region" description="Helical; Name=25" evidence="15 17 29 31">
    <location>
        <begin position="1149"/>
        <end position="1175"/>
    </location>
</feature>
<feature type="topological domain" description="Extracellular" evidence="15 17 29 31">
    <location>
        <begin position="1176"/>
        <end position="1180"/>
    </location>
</feature>
<feature type="transmembrane region" description="Helical; Name=26" evidence="15 17 29 31">
    <location>
        <begin position="1181"/>
        <end position="1199"/>
    </location>
</feature>
<feature type="topological domain" description="Cytoplasmic" evidence="15 17 29 31">
    <location>
        <begin position="1200"/>
        <end position="1212"/>
    </location>
</feature>
<feature type="transmembrane region" description="Helical; Name=27" evidence="15 17 29 31">
    <location>
        <begin position="1213"/>
        <end position="1231"/>
    </location>
</feature>
<feature type="topological domain" description="Extracellular" evidence="15 17 29 31">
    <location>
        <begin position="1232"/>
        <end position="1280"/>
    </location>
</feature>
<feature type="transmembrane region" description="Helical; Name=28" evidence="15 17 29 31">
    <location>
        <begin position="1281"/>
        <end position="1297"/>
    </location>
</feature>
<feature type="topological domain" description="Cytoplasmic" evidence="15 17 29 31">
    <location>
        <begin position="1298"/>
        <end position="1656"/>
    </location>
</feature>
<feature type="transmembrane region" description="Helical; Name=29" evidence="15 17 29 31">
    <location>
        <begin position="1657"/>
        <end position="1700"/>
    </location>
</feature>
<feature type="topological domain" description="Extracellular" evidence="15 17 29 31">
    <location>
        <begin position="1701"/>
        <end position="1704"/>
    </location>
</feature>
<feature type="transmembrane region" description="Helical; Name=30" evidence="15 17 29 31">
    <location>
        <begin position="1705"/>
        <end position="1720"/>
    </location>
</feature>
<feature type="topological domain" description="Cytoplasmic" evidence="15 17 29 31">
    <location>
        <begin position="1721"/>
        <end position="1728"/>
    </location>
</feature>
<feature type="transmembrane region" description="Helical; Name=31" evidence="15 17 29 31">
    <location>
        <begin position="1729"/>
        <end position="1747"/>
    </location>
</feature>
<feature type="topological domain" description="Extracellular" evidence="15 17 29 31">
    <location>
        <begin position="1748"/>
        <end position="1779"/>
    </location>
</feature>
<feature type="transmembrane region" description="Helical; Name=32" evidence="15 17 29 31">
    <location>
        <begin position="1780"/>
        <end position="1801"/>
    </location>
</feature>
<feature type="topological domain" description="Cytoplasmic" evidence="15 17 29 31">
    <location>
        <begin position="1802"/>
        <end position="1976"/>
    </location>
</feature>
<feature type="transmembrane region" description="Helical; Name=33" evidence="15 17 29 31">
    <location>
        <begin position="1977"/>
        <end position="1996"/>
    </location>
</feature>
<feature type="topological domain" description="Extracellular" evidence="15 17 29 31">
    <location>
        <begin position="1997"/>
        <end position="2016"/>
    </location>
</feature>
<feature type="transmembrane region" description="Helical; Name=34" evidence="15 17 29 31">
    <location>
        <begin position="2017"/>
        <end position="2033"/>
    </location>
</feature>
<feature type="topological domain" description="Cytoplasmic" evidence="15 17 29 31">
    <location>
        <begin position="2034"/>
        <end position="2047"/>
    </location>
</feature>
<feature type="transmembrane region" description="Helical; Name=35" evidence="15 17 29 31">
    <location>
        <begin position="2048"/>
        <end position="2068"/>
    </location>
</feature>
<feature type="topological domain" description="Extracellular" evidence="15 17 29 31">
    <location>
        <begin position="2069"/>
        <end position="2076"/>
    </location>
</feature>
<feature type="transmembrane region" description="Helical; Name=36" evidence="15 17 29 31">
    <location>
        <begin position="2077"/>
        <end position="2092"/>
    </location>
</feature>
<feature type="topological domain" description="Cytoplasmic" evidence="15 17 29 31">
    <location>
        <begin position="2093"/>
        <end position="2192"/>
    </location>
</feature>
<feature type="transmembrane region" description="Helical; Name=37" evidence="15 17 29 31">
    <location>
        <begin position="2193"/>
        <end position="2213"/>
    </location>
</feature>
<feature type="topological domain" description="Extracellular" evidence="12 15 17 29 31">
    <location>
        <begin position="2214"/>
        <end position="2457"/>
    </location>
</feature>
<feature type="transmembrane region" description="Helical; Name=38" evidence="15 17 29 31">
    <location>
        <begin position="2458"/>
        <end position="2478"/>
    </location>
</feature>
<feature type="topological domain" description="Cytoplasmic" evidence="15 17 29 31">
    <location>
        <begin position="2479"/>
        <end position="2547"/>
    </location>
</feature>
<feature type="region of interest" description="Disordered" evidence="4">
    <location>
        <begin position="347"/>
        <end position="387"/>
    </location>
</feature>
<feature type="region of interest" description="Disordered" evidence="4">
    <location>
        <begin position="1354"/>
        <end position="1396"/>
    </location>
</feature>
<feature type="region of interest" description="Disordered" evidence="4">
    <location>
        <begin position="1456"/>
        <end position="1480"/>
    </location>
</feature>
<feature type="region of interest" description="Disordered" evidence="4">
    <location>
        <begin position="1567"/>
        <end position="1610"/>
    </location>
</feature>
<feature type="region of interest" description="Disordered" evidence="4">
    <location>
        <begin position="1816"/>
        <end position="1931"/>
    </location>
</feature>
<feature type="coiled-coil region" evidence="3">
    <location>
        <begin position="1334"/>
        <end position="1365"/>
    </location>
</feature>
<feature type="compositionally biased region" description="Basic and acidic residues" evidence="4">
    <location>
        <begin position="361"/>
        <end position="371"/>
    </location>
</feature>
<feature type="compositionally biased region" description="Polar residues" evidence="4">
    <location>
        <begin position="1361"/>
        <end position="1372"/>
    </location>
</feature>
<feature type="compositionally biased region" description="Low complexity" evidence="4">
    <location>
        <begin position="1376"/>
        <end position="1392"/>
    </location>
</feature>
<feature type="compositionally biased region" description="Polar residues" evidence="4">
    <location>
        <begin position="1592"/>
        <end position="1610"/>
    </location>
</feature>
<feature type="compositionally biased region" description="Basic and acidic residues" evidence="4">
    <location>
        <begin position="1816"/>
        <end position="1837"/>
    </location>
</feature>
<feature type="compositionally biased region" description="Basic and acidic residues" evidence="4">
    <location>
        <begin position="1855"/>
        <end position="1880"/>
    </location>
</feature>
<feature type="compositionally biased region" description="Basic residues" evidence="4">
    <location>
        <begin position="1881"/>
        <end position="1894"/>
    </location>
</feature>
<feature type="compositionally biased region" description="Basic and acidic residues" evidence="4">
    <location>
        <begin position="1912"/>
        <end position="1931"/>
    </location>
</feature>
<feature type="modified residue" description="Phosphoserine" evidence="1">
    <location>
        <position position="758"/>
    </location>
</feature>
<feature type="modified residue" description="Phosphoserine" evidence="32">
    <location>
        <position position="1385"/>
    </location>
</feature>
<feature type="modified residue" description="Phosphoserine" evidence="2">
    <location>
        <position position="1390"/>
    </location>
</feature>
<feature type="modified residue" description="Phosphoserine" evidence="33">
    <location>
        <position position="1627"/>
    </location>
</feature>
<feature type="modified residue" description="Phosphoserine" evidence="33">
    <location>
        <position position="1631"/>
    </location>
</feature>
<feature type="modified residue" description="Phosphoserine" evidence="32 33">
    <location>
        <position position="1646"/>
    </location>
</feature>
<feature type="glycosylation site" description="N-linked (GlcNAc...) asparagine" evidence="3">
    <location>
        <position position="94"/>
    </location>
</feature>
<feature type="disulfide bond" evidence="12 13 26 27 28">
    <location>
        <begin position="2437"/>
        <end position="2441"/>
    </location>
</feature>
<feature type="mutagenesis site" description="Affects channel gating properties resulting in reduced pressure-induced channel opening. No effect on channel conductance. No effect on localization to cell membrane." evidence="18">
    <original>S</original>
    <variation>R</variation>
    <location>
        <position position="260"/>
    </location>
</feature>
<feature type="mutagenesis site" description="Affects channel gating properties resulting in reduced pressure-induced channel opening. No effect on channel conductance. No effect on localization to cell membrane." evidence="18">
    <original>S</original>
    <variation>L</variation>
    <location>
        <position position="2211"/>
    </location>
</feature>
<feature type="mutagenesis site" description="Hearing and vestibular impairment in conditional knockin mice in inner ear hair cells." evidence="19">
    <original>MFEE</original>
    <variation>AAAA</variation>
    <location>
        <begin position="2493"/>
        <end position="2496"/>
    </location>
</feature>
<feature type="mutagenesis site" description="Non-functional channel. Proper trimeric assembly and subcellular location." evidence="13">
    <original>MF</original>
    <variation>AA</variation>
    <location>
        <begin position="2493"/>
        <end position="2494"/>
    </location>
</feature>
<feature type="mutagenesis site" description="Increased channel activity." evidence="13">
    <original>F</original>
    <variation>A</variation>
    <location>
        <position position="2494"/>
    </location>
</feature>
<feature type="helix" evidence="35">
    <location>
        <begin position="785"/>
        <end position="823"/>
    </location>
</feature>
<feature type="helix" evidence="35">
    <location>
        <begin position="827"/>
        <end position="839"/>
    </location>
</feature>
<feature type="helix" evidence="35">
    <location>
        <begin position="846"/>
        <end position="867"/>
    </location>
</feature>
<feature type="strand" evidence="35">
    <location>
        <begin position="900"/>
        <end position="904"/>
    </location>
</feature>
<feature type="strand" evidence="35">
    <location>
        <begin position="918"/>
        <end position="921"/>
    </location>
</feature>
<feature type="helix" evidence="35">
    <location>
        <begin position="925"/>
        <end position="949"/>
    </location>
</feature>
<feature type="strand" evidence="35">
    <location>
        <begin position="969"/>
        <end position="972"/>
    </location>
</feature>
<feature type="helix" evidence="35">
    <location>
        <begin position="974"/>
        <end position="984"/>
    </location>
</feature>
<feature type="turn" evidence="35">
    <location>
        <begin position="985"/>
        <end position="989"/>
    </location>
</feature>
<feature type="helix" evidence="35">
    <location>
        <begin position="990"/>
        <end position="1005"/>
    </location>
</feature>
<feature type="helix" evidence="35">
    <location>
        <begin position="1008"/>
        <end position="1022"/>
    </location>
</feature>
<feature type="helix" evidence="35">
    <location>
        <begin position="1026"/>
        <end position="1052"/>
    </location>
</feature>
<feature type="helix" evidence="35">
    <location>
        <begin position="1074"/>
        <end position="1079"/>
    </location>
</feature>
<feature type="strand" evidence="35">
    <location>
        <begin position="1085"/>
        <end position="1087"/>
    </location>
</feature>
<feature type="helix" evidence="35">
    <location>
        <begin position="1094"/>
        <end position="1113"/>
    </location>
</feature>
<feature type="turn" evidence="35">
    <location>
        <begin position="1114"/>
        <end position="1118"/>
    </location>
</feature>
<feature type="turn" evidence="35">
    <location>
        <begin position="1143"/>
        <end position="1145"/>
    </location>
</feature>
<feature type="helix" evidence="35">
    <location>
        <begin position="1149"/>
        <end position="1159"/>
    </location>
</feature>
<feature type="helix" evidence="35">
    <location>
        <begin position="1162"/>
        <end position="1175"/>
    </location>
</feature>
<feature type="helix" evidence="35">
    <location>
        <begin position="1181"/>
        <end position="1200"/>
    </location>
</feature>
<feature type="helix" evidence="35">
    <location>
        <begin position="1203"/>
        <end position="1227"/>
    </location>
</feature>
<feature type="helix" evidence="35">
    <location>
        <begin position="1228"/>
        <end position="1231"/>
    </location>
</feature>
<feature type="turn" evidence="35">
    <location>
        <begin position="1232"/>
        <end position="1240"/>
    </location>
</feature>
<feature type="helix" evidence="35">
    <location>
        <begin position="1243"/>
        <end position="1249"/>
    </location>
</feature>
<feature type="strand" evidence="35">
    <location>
        <begin position="1255"/>
        <end position="1259"/>
    </location>
</feature>
<feature type="strand" evidence="35">
    <location>
        <begin position="1261"/>
        <end position="1263"/>
    </location>
</feature>
<feature type="helix" evidence="35">
    <location>
        <begin position="1264"/>
        <end position="1266"/>
    </location>
</feature>
<feature type="strand" evidence="35">
    <location>
        <begin position="1275"/>
        <end position="1277"/>
    </location>
</feature>
<feature type="helix" evidence="35">
    <location>
        <begin position="1281"/>
        <end position="1298"/>
    </location>
</feature>
<feature type="helix" evidence="35">
    <location>
        <begin position="1300"/>
        <end position="1364"/>
    </location>
</feature>
<feature type="helix" evidence="35">
    <location>
        <begin position="1403"/>
        <end position="1407"/>
    </location>
</feature>
<feature type="helix" evidence="35">
    <location>
        <begin position="1412"/>
        <end position="1415"/>
    </location>
</feature>
<feature type="helix" evidence="35">
    <location>
        <begin position="1494"/>
        <end position="1547"/>
    </location>
</feature>
<feature type="helix" evidence="35">
    <location>
        <begin position="1553"/>
        <end position="1556"/>
    </location>
</feature>
<feature type="helix" evidence="35">
    <location>
        <begin position="1657"/>
        <end position="1668"/>
    </location>
</feature>
<feature type="helix" evidence="35">
    <location>
        <begin position="1673"/>
        <end position="1685"/>
    </location>
</feature>
<feature type="helix" evidence="35">
    <location>
        <begin position="1687"/>
        <end position="1700"/>
    </location>
</feature>
<feature type="helix" evidence="35">
    <location>
        <begin position="1705"/>
        <end position="1716"/>
    </location>
</feature>
<feature type="turn" evidence="35">
    <location>
        <begin position="1717"/>
        <end position="1720"/>
    </location>
</feature>
<feature type="strand" evidence="35">
    <location>
        <begin position="1721"/>
        <end position="1724"/>
    </location>
</feature>
<feature type="helix" evidence="35">
    <location>
        <begin position="1727"/>
        <end position="1748"/>
    </location>
</feature>
<feature type="strand" evidence="35">
    <location>
        <begin position="1756"/>
        <end position="1758"/>
    </location>
</feature>
<feature type="helix" evidence="35">
    <location>
        <begin position="1759"/>
        <end position="1762"/>
    </location>
</feature>
<feature type="helix" evidence="35">
    <location>
        <begin position="1770"/>
        <end position="1774"/>
    </location>
</feature>
<feature type="strand" evidence="35">
    <location>
        <begin position="1784"/>
        <end position="1786"/>
    </location>
</feature>
<feature type="helix" evidence="35">
    <location>
        <begin position="1787"/>
        <end position="1802"/>
    </location>
</feature>
<feature type="helix" evidence="35">
    <location>
        <begin position="1947"/>
        <end position="1967"/>
    </location>
</feature>
<feature type="helix" evidence="35">
    <location>
        <begin position="1977"/>
        <end position="1996"/>
    </location>
</feature>
<feature type="helix" evidence="35">
    <location>
        <begin position="2017"/>
        <end position="2040"/>
    </location>
</feature>
<feature type="helix" evidence="35">
    <location>
        <begin position="2043"/>
        <end position="2062"/>
    </location>
</feature>
<feature type="helix" evidence="35">
    <location>
        <begin position="2064"/>
        <end position="2068"/>
    </location>
</feature>
<feature type="turn" evidence="35">
    <location>
        <begin position="2072"/>
        <end position="2074"/>
    </location>
</feature>
<feature type="helix" evidence="35">
    <location>
        <begin position="2077"/>
        <end position="2099"/>
    </location>
</feature>
<feature type="helix" evidence="35">
    <location>
        <begin position="2109"/>
        <end position="2111"/>
    </location>
</feature>
<feature type="helix" evidence="35">
    <location>
        <begin position="2116"/>
        <end position="2127"/>
    </location>
</feature>
<feature type="helix" evidence="35">
    <location>
        <begin position="2131"/>
        <end position="2142"/>
    </location>
</feature>
<feature type="helix" evidence="35">
    <location>
        <begin position="2149"/>
        <end position="2174"/>
    </location>
</feature>
<feature type="helix" evidence="35">
    <location>
        <begin position="2185"/>
        <end position="2213"/>
    </location>
</feature>
<feature type="strand" evidence="34">
    <location>
        <begin position="2224"/>
        <end position="2232"/>
    </location>
</feature>
<feature type="turn" evidence="35">
    <location>
        <begin position="2233"/>
        <end position="2235"/>
    </location>
</feature>
<feature type="strand" evidence="34">
    <location>
        <begin position="2238"/>
        <end position="2243"/>
    </location>
</feature>
<feature type="strand" evidence="34">
    <location>
        <begin position="2247"/>
        <end position="2250"/>
    </location>
</feature>
<feature type="helix" evidence="34">
    <location>
        <begin position="2253"/>
        <end position="2263"/>
    </location>
</feature>
<feature type="helix" evidence="34">
    <location>
        <begin position="2267"/>
        <end position="2273"/>
    </location>
</feature>
<feature type="helix" evidence="34">
    <location>
        <begin position="2278"/>
        <end position="2280"/>
    </location>
</feature>
<feature type="strand" evidence="34">
    <location>
        <begin position="2281"/>
        <end position="2289"/>
    </location>
</feature>
<feature type="helix" evidence="34">
    <location>
        <begin position="2298"/>
        <end position="2310"/>
    </location>
</feature>
<feature type="strand" evidence="34">
    <location>
        <begin position="2315"/>
        <end position="2324"/>
    </location>
</feature>
<feature type="helix" evidence="34">
    <location>
        <begin position="2327"/>
        <end position="2329"/>
    </location>
</feature>
<feature type="strand" evidence="34">
    <location>
        <begin position="2334"/>
        <end position="2344"/>
    </location>
</feature>
<feature type="helix" evidence="34">
    <location>
        <begin position="2349"/>
        <end position="2357"/>
    </location>
</feature>
<feature type="strand" evidence="34">
    <location>
        <begin position="2366"/>
        <end position="2372"/>
    </location>
</feature>
<feature type="strand" evidence="34">
    <location>
        <begin position="2375"/>
        <end position="2378"/>
    </location>
</feature>
<feature type="strand" evidence="34">
    <location>
        <begin position="2380"/>
        <end position="2383"/>
    </location>
</feature>
<feature type="turn" evidence="34">
    <location>
        <begin position="2388"/>
        <end position="2390"/>
    </location>
</feature>
<feature type="helix" evidence="34">
    <location>
        <begin position="2394"/>
        <end position="2397"/>
    </location>
</feature>
<feature type="strand" evidence="34">
    <location>
        <begin position="2398"/>
        <end position="2409"/>
    </location>
</feature>
<feature type="helix" evidence="35">
    <location>
        <begin position="2423"/>
        <end position="2425"/>
    </location>
</feature>
<feature type="strand" evidence="34">
    <location>
        <begin position="2426"/>
        <end position="2434"/>
    </location>
</feature>
<feature type="strand" evidence="34">
    <location>
        <begin position="2443"/>
        <end position="2450"/>
    </location>
</feature>
<feature type="strand" evidence="35">
    <location>
        <begin position="2462"/>
        <end position="2466"/>
    </location>
</feature>
<feature type="helix" evidence="35">
    <location>
        <begin position="2467"/>
        <end position="2482"/>
    </location>
</feature>
<feature type="turn" evidence="35">
    <location>
        <begin position="2483"/>
        <end position="2485"/>
    </location>
</feature>
<feature type="helix" evidence="35">
    <location>
        <begin position="2489"/>
        <end position="2492"/>
    </location>
</feature>
<feature type="turn" evidence="35">
    <location>
        <begin position="2493"/>
        <end position="2495"/>
    </location>
</feature>
<feature type="helix" evidence="35">
    <location>
        <begin position="2501"/>
        <end position="2516"/>
    </location>
</feature>
<feature type="helix" evidence="35">
    <location>
        <begin position="2519"/>
        <end position="2534"/>
    </location>
</feature>
<feature type="helix" evidence="35">
    <location>
        <begin position="2536"/>
        <end position="2542"/>
    </location>
</feature>
<name>PIEZ1_MOUSE</name>
<gene>
    <name evidence="25" type="primary">Piezo1</name>
    <name type="synonym">Fam38a</name>
</gene>
<evidence type="ECO:0000250" key="1">
    <source>
        <dbReference type="UniProtKB" id="Q0KL00"/>
    </source>
</evidence>
<evidence type="ECO:0000250" key="2">
    <source>
        <dbReference type="UniProtKB" id="Q92508"/>
    </source>
</evidence>
<evidence type="ECO:0000255" key="3"/>
<evidence type="ECO:0000256" key="4">
    <source>
        <dbReference type="SAM" id="MobiDB-lite"/>
    </source>
</evidence>
<evidence type="ECO:0000269" key="5">
    <source>
    </source>
</evidence>
<evidence type="ECO:0000269" key="6">
    <source>
    </source>
</evidence>
<evidence type="ECO:0000269" key="7">
    <source>
    </source>
</evidence>
<evidence type="ECO:0000269" key="8">
    <source>
    </source>
</evidence>
<evidence type="ECO:0000269" key="9">
    <source>
    </source>
</evidence>
<evidence type="ECO:0000269" key="10">
    <source>
    </source>
</evidence>
<evidence type="ECO:0000269" key="11">
    <source>
    </source>
</evidence>
<evidence type="ECO:0000269" key="12">
    <source>
    </source>
</evidence>
<evidence type="ECO:0000269" key="13">
    <source>
    </source>
</evidence>
<evidence type="ECO:0000269" key="14">
    <source>
    </source>
</evidence>
<evidence type="ECO:0000269" key="15">
    <source>
    </source>
</evidence>
<evidence type="ECO:0000269" key="16">
    <source>
    </source>
</evidence>
<evidence type="ECO:0000269" key="17">
    <source>
    </source>
</evidence>
<evidence type="ECO:0000269" key="18">
    <source>
    </source>
</evidence>
<evidence type="ECO:0000269" key="19">
    <source>
    </source>
</evidence>
<evidence type="ECO:0000303" key="20">
    <source>
    </source>
</evidence>
<evidence type="ECO:0000305" key="21"/>
<evidence type="ECO:0000305" key="22">
    <source>
    </source>
</evidence>
<evidence type="ECO:0000305" key="23">
    <source>
    </source>
</evidence>
<evidence type="ECO:0000305" key="24">
    <source>
    </source>
</evidence>
<evidence type="ECO:0000312" key="25">
    <source>
        <dbReference type="MGI" id="MGI:3603204"/>
    </source>
</evidence>
<evidence type="ECO:0007744" key="26">
    <source>
        <dbReference type="PDB" id="3JAC"/>
    </source>
</evidence>
<evidence type="ECO:0007744" key="27">
    <source>
        <dbReference type="PDB" id="4RAX"/>
    </source>
</evidence>
<evidence type="ECO:0007744" key="28">
    <source>
        <dbReference type="PDB" id="6BPZ"/>
    </source>
</evidence>
<evidence type="ECO:0007744" key="29">
    <source>
        <dbReference type="PDB" id="7WLT"/>
    </source>
</evidence>
<evidence type="ECO:0007744" key="30">
    <source>
        <dbReference type="PDB" id="7WLU"/>
    </source>
</evidence>
<evidence type="ECO:0007744" key="31">
    <source>
        <dbReference type="PDB" id="8IMZ"/>
    </source>
</evidence>
<evidence type="ECO:0007744" key="32">
    <source>
    </source>
</evidence>
<evidence type="ECO:0007744" key="33">
    <source>
    </source>
</evidence>
<evidence type="ECO:0007829" key="34">
    <source>
        <dbReference type="PDB" id="4RAX"/>
    </source>
</evidence>
<evidence type="ECO:0007829" key="35">
    <source>
        <dbReference type="PDB" id="7WLT"/>
    </source>
</evidence>